<reference key="1">
    <citation type="submission" date="1994-12" db="EMBL/GenBank/DDBJ databases">
        <title>A gene encoding an inner mitochondrial membrane protein in Arabidopsis thaliana.</title>
        <authorList>
            <person name="Almira E.C."/>
            <person name="Lu G."/>
            <person name="Ferl R.J."/>
        </authorList>
    </citation>
    <scope>NUCLEOTIDE SEQUENCE [MRNA]</scope>
    <source>
        <strain>cv. Columbia</strain>
    </source>
</reference>
<reference key="2">
    <citation type="journal article" date="2003" name="Plant Physiol.">
        <title>Identification, expression, and import of components 17 and 23 of the inner mitochondrial membrane translocase from Arabidopsis.</title>
        <authorList>
            <person name="Murcha M.W."/>
            <person name="Lister R."/>
            <person name="Ho A.Y."/>
            <person name="Whelan J."/>
        </authorList>
    </citation>
    <scope>NUCLEOTIDE SEQUENCE [MRNA]</scope>
    <scope>TISSUE SPECIFICITY</scope>
    <scope>DEVELOPMENTAL STAGE</scope>
    <scope>SUBCELLULAR LOCATION</scope>
</reference>
<reference key="3">
    <citation type="journal article" date="2000" name="Nature">
        <title>Sequence and analysis of chromosome 1 of the plant Arabidopsis thaliana.</title>
        <authorList>
            <person name="Theologis A."/>
            <person name="Ecker J.R."/>
            <person name="Palm C.J."/>
            <person name="Federspiel N.A."/>
            <person name="Kaul S."/>
            <person name="White O."/>
            <person name="Alonso J."/>
            <person name="Altafi H."/>
            <person name="Araujo R."/>
            <person name="Bowman C.L."/>
            <person name="Brooks S.Y."/>
            <person name="Buehler E."/>
            <person name="Chan A."/>
            <person name="Chao Q."/>
            <person name="Chen H."/>
            <person name="Cheuk R.F."/>
            <person name="Chin C.W."/>
            <person name="Chung M.K."/>
            <person name="Conn L."/>
            <person name="Conway A.B."/>
            <person name="Conway A.R."/>
            <person name="Creasy T.H."/>
            <person name="Dewar K."/>
            <person name="Dunn P."/>
            <person name="Etgu P."/>
            <person name="Feldblyum T.V."/>
            <person name="Feng J.-D."/>
            <person name="Fong B."/>
            <person name="Fujii C.Y."/>
            <person name="Gill J.E."/>
            <person name="Goldsmith A.D."/>
            <person name="Haas B."/>
            <person name="Hansen N.F."/>
            <person name="Hughes B."/>
            <person name="Huizar L."/>
            <person name="Hunter J.L."/>
            <person name="Jenkins J."/>
            <person name="Johnson-Hopson C."/>
            <person name="Khan S."/>
            <person name="Khaykin E."/>
            <person name="Kim C.J."/>
            <person name="Koo H.L."/>
            <person name="Kremenetskaia I."/>
            <person name="Kurtz D.B."/>
            <person name="Kwan A."/>
            <person name="Lam B."/>
            <person name="Langin-Hooper S."/>
            <person name="Lee A."/>
            <person name="Lee J.M."/>
            <person name="Lenz C.A."/>
            <person name="Li J.H."/>
            <person name="Li Y.-P."/>
            <person name="Lin X."/>
            <person name="Liu S.X."/>
            <person name="Liu Z.A."/>
            <person name="Luros J.S."/>
            <person name="Maiti R."/>
            <person name="Marziali A."/>
            <person name="Militscher J."/>
            <person name="Miranda M."/>
            <person name="Nguyen M."/>
            <person name="Nierman W.C."/>
            <person name="Osborne B.I."/>
            <person name="Pai G."/>
            <person name="Peterson J."/>
            <person name="Pham P.K."/>
            <person name="Rizzo M."/>
            <person name="Rooney T."/>
            <person name="Rowley D."/>
            <person name="Sakano H."/>
            <person name="Salzberg S.L."/>
            <person name="Schwartz J.R."/>
            <person name="Shinn P."/>
            <person name="Southwick A.M."/>
            <person name="Sun H."/>
            <person name="Tallon L.J."/>
            <person name="Tambunga G."/>
            <person name="Toriumi M.J."/>
            <person name="Town C.D."/>
            <person name="Utterback T."/>
            <person name="Van Aken S."/>
            <person name="Vaysberg M."/>
            <person name="Vysotskaia V.S."/>
            <person name="Walker M."/>
            <person name="Wu D."/>
            <person name="Yu G."/>
            <person name="Fraser C.M."/>
            <person name="Venter J.C."/>
            <person name="Davis R.W."/>
        </authorList>
    </citation>
    <scope>NUCLEOTIDE SEQUENCE [LARGE SCALE GENOMIC DNA]</scope>
    <source>
        <strain>cv. Columbia</strain>
    </source>
</reference>
<reference key="4">
    <citation type="journal article" date="2017" name="Plant J.">
        <title>Araport11: a complete reannotation of the Arabidopsis thaliana reference genome.</title>
        <authorList>
            <person name="Cheng C.Y."/>
            <person name="Krishnakumar V."/>
            <person name="Chan A.P."/>
            <person name="Thibaud-Nissen F."/>
            <person name="Schobel S."/>
            <person name="Town C.D."/>
        </authorList>
    </citation>
    <scope>GENOME REANNOTATION</scope>
    <source>
        <strain>cv. Columbia</strain>
    </source>
</reference>
<reference key="5">
    <citation type="submission" date="2002-03" db="EMBL/GenBank/DDBJ databases">
        <title>Full-length cDNA from Arabidopsis thaliana.</title>
        <authorList>
            <person name="Brover V.V."/>
            <person name="Troukhan M.E."/>
            <person name="Alexandrov N.A."/>
            <person name="Lu Y.-P."/>
            <person name="Flavell R.B."/>
            <person name="Feldmann K.A."/>
        </authorList>
    </citation>
    <scope>NUCLEOTIDE SEQUENCE [LARGE SCALE MRNA]</scope>
</reference>
<reference key="6">
    <citation type="journal article" date="2003" name="Science">
        <title>Empirical analysis of transcriptional activity in the Arabidopsis genome.</title>
        <authorList>
            <person name="Yamada K."/>
            <person name="Lim J."/>
            <person name="Dale J.M."/>
            <person name="Chen H."/>
            <person name="Shinn P."/>
            <person name="Palm C.J."/>
            <person name="Southwick A.M."/>
            <person name="Wu H.C."/>
            <person name="Kim C.J."/>
            <person name="Nguyen M."/>
            <person name="Pham P.K."/>
            <person name="Cheuk R.F."/>
            <person name="Karlin-Newmann G."/>
            <person name="Liu S.X."/>
            <person name="Lam B."/>
            <person name="Sakano H."/>
            <person name="Wu T."/>
            <person name="Yu G."/>
            <person name="Miranda M."/>
            <person name="Quach H.L."/>
            <person name="Tripp M."/>
            <person name="Chang C.H."/>
            <person name="Lee J.M."/>
            <person name="Toriumi M.J."/>
            <person name="Chan M.M."/>
            <person name="Tang C.C."/>
            <person name="Onodera C.S."/>
            <person name="Deng J.M."/>
            <person name="Akiyama K."/>
            <person name="Ansari Y."/>
            <person name="Arakawa T."/>
            <person name="Banh J."/>
            <person name="Banno F."/>
            <person name="Bowser L."/>
            <person name="Brooks S.Y."/>
            <person name="Carninci P."/>
            <person name="Chao Q."/>
            <person name="Choy N."/>
            <person name="Enju A."/>
            <person name="Goldsmith A.D."/>
            <person name="Gurjal M."/>
            <person name="Hansen N.F."/>
            <person name="Hayashizaki Y."/>
            <person name="Johnson-Hopson C."/>
            <person name="Hsuan V.W."/>
            <person name="Iida K."/>
            <person name="Karnes M."/>
            <person name="Khan S."/>
            <person name="Koesema E."/>
            <person name="Ishida J."/>
            <person name="Jiang P.X."/>
            <person name="Jones T."/>
            <person name="Kawai J."/>
            <person name="Kamiya A."/>
            <person name="Meyers C."/>
            <person name="Nakajima M."/>
            <person name="Narusaka M."/>
            <person name="Seki M."/>
            <person name="Sakurai T."/>
            <person name="Satou M."/>
            <person name="Tamse R."/>
            <person name="Vaysberg M."/>
            <person name="Wallender E.K."/>
            <person name="Wong C."/>
            <person name="Yamamura Y."/>
            <person name="Yuan S."/>
            <person name="Shinozaki K."/>
            <person name="Davis R.W."/>
            <person name="Theologis A."/>
            <person name="Ecker J.R."/>
        </authorList>
    </citation>
    <scope>NUCLEOTIDE SEQUENCE [LARGE SCALE MRNA]</scope>
    <source>
        <strain>cv. Columbia</strain>
    </source>
</reference>
<reference key="7">
    <citation type="journal article" date="2004" name="Plant Physiol.">
        <title>A transcriptomic and proteomic characterization of the Arabidopsis mitochondrial protein import apparatus and its response to mitochondrial dysfunction.</title>
        <authorList>
            <person name="Lister R."/>
            <person name="Chew O."/>
            <person name="Lee M.N."/>
            <person name="Heazlewood J.L."/>
            <person name="Clifton R."/>
            <person name="Parker K.L."/>
            <person name="Millar A.H."/>
            <person name="Whelan J."/>
        </authorList>
    </citation>
    <scope>TISSUE SPECIFICITY</scope>
    <scope>SUBCELLULAR LOCATION</scope>
    <scope>IDENTIFICATION BY MASS SPECTROMETRY</scope>
</reference>
<reference key="8">
    <citation type="journal article" date="2007" name="Plant Physiol.">
        <title>Characterization of the preprotein and amino acid transporter gene family in Arabidopsis.</title>
        <authorList>
            <person name="Murcha M.W."/>
            <person name="Elhafez D."/>
            <person name="Lister R."/>
            <person name="Tonti-Filippini J."/>
            <person name="Baumgartner M."/>
            <person name="Philippar K."/>
            <person name="Carrie C."/>
            <person name="Mokranjac D."/>
            <person name="Soll J."/>
            <person name="Whelan J."/>
        </authorList>
    </citation>
    <scope>SUBCELLULAR LOCATION</scope>
</reference>
<reference key="9">
    <citation type="journal article" date="2012" name="Plant Cell">
        <title>Dual location of the mitochondrial preprotein transporters B14.7 and Tim23-2 in complex I and the TIM17:23 complex in Arabidopsis links mitochondrial activity and biogenesis.</title>
        <authorList>
            <person name="Wang Y."/>
            <person name="Carrie C."/>
            <person name="Giraud E."/>
            <person name="Elhafez D."/>
            <person name="Narsai R."/>
            <person name="Duncan O."/>
            <person name="Whelan J."/>
            <person name="Murcha M.W."/>
        </authorList>
    </citation>
    <scope>INTERACTION WITH OEP163; TIM17-2; TIM21; TIM50 AND MPPA2</scope>
    <scope>SUBUNIT</scope>
    <scope>SUBCELLULAR LOCATION</scope>
</reference>
<feature type="chain" id="PRO_0000420939" description="Mitochondrial import inner membrane translocase subunit TIM23-2">
    <location>
        <begin position="1"/>
        <end position="188"/>
    </location>
</feature>
<feature type="transmembrane region" description="Helical" evidence="2">
    <location>
        <begin position="64"/>
        <end position="84"/>
    </location>
</feature>
<feature type="transmembrane region" description="Helical" evidence="2">
    <location>
        <begin position="112"/>
        <end position="131"/>
    </location>
</feature>
<feature type="transmembrane region" description="Helical" evidence="2">
    <location>
        <begin position="138"/>
        <end position="154"/>
    </location>
</feature>
<feature type="transmembrane region" description="Helical" evidence="2">
    <location>
        <begin position="161"/>
        <end position="178"/>
    </location>
</feature>
<dbReference type="EMBL" id="U18126">
    <property type="protein sequence ID" value="AAA57314.1"/>
    <property type="molecule type" value="mRNA"/>
</dbReference>
<dbReference type="EMBL" id="AY463973">
    <property type="protein sequence ID" value="AAR26374.1"/>
    <property type="molecule type" value="mRNA"/>
</dbReference>
<dbReference type="EMBL" id="AC010926">
    <property type="protein sequence ID" value="AAG51855.1"/>
    <property type="molecule type" value="Genomic_DNA"/>
</dbReference>
<dbReference type="EMBL" id="CP002684">
    <property type="protein sequence ID" value="AEE35368.1"/>
    <property type="molecule type" value="Genomic_DNA"/>
</dbReference>
<dbReference type="EMBL" id="AY072498">
    <property type="protein sequence ID" value="AAL66913.1"/>
    <property type="molecule type" value="mRNA"/>
</dbReference>
<dbReference type="EMBL" id="AY042892">
    <property type="protein sequence ID" value="AAK68832.1"/>
    <property type="molecule type" value="mRNA"/>
</dbReference>
<dbReference type="EMBL" id="AY088456">
    <property type="protein sequence ID" value="AAM65992.1"/>
    <property type="molecule type" value="mRNA"/>
</dbReference>
<dbReference type="PIR" id="S71194">
    <property type="entry name" value="S71194"/>
</dbReference>
<dbReference type="RefSeq" id="NP_177419.1">
    <property type="nucleotide sequence ID" value="NM_105934.2"/>
</dbReference>
<dbReference type="SMR" id="Q38820"/>
<dbReference type="BioGRID" id="28826">
    <property type="interactions" value="7"/>
</dbReference>
<dbReference type="FunCoup" id="Q38820">
    <property type="interactions" value="2895"/>
</dbReference>
<dbReference type="STRING" id="3702.Q38820"/>
<dbReference type="TCDB" id="3.A.8.1.4">
    <property type="family name" value="the mitochondrial protein translocase (mpt) family"/>
</dbReference>
<dbReference type="SwissPalm" id="Q38820"/>
<dbReference type="PaxDb" id="3702-AT1G72750.1"/>
<dbReference type="ProteomicsDB" id="246485"/>
<dbReference type="EnsemblPlants" id="AT1G72750.1">
    <property type="protein sequence ID" value="AT1G72750.1"/>
    <property type="gene ID" value="AT1G72750"/>
</dbReference>
<dbReference type="GeneID" id="843607"/>
<dbReference type="Gramene" id="AT1G72750.1">
    <property type="protein sequence ID" value="AT1G72750.1"/>
    <property type="gene ID" value="AT1G72750"/>
</dbReference>
<dbReference type="KEGG" id="ath:AT1G72750"/>
<dbReference type="Araport" id="AT1G72750"/>
<dbReference type="TAIR" id="AT1G72750">
    <property type="gene designation" value="TIM23-2"/>
</dbReference>
<dbReference type="eggNOG" id="KOG3324">
    <property type="taxonomic scope" value="Eukaryota"/>
</dbReference>
<dbReference type="HOGENOM" id="CLU_118311_0_0_1"/>
<dbReference type="InParanoid" id="Q38820"/>
<dbReference type="OMA" id="DNDNIWS"/>
<dbReference type="OrthoDB" id="159299at2759"/>
<dbReference type="PhylomeDB" id="Q38820"/>
<dbReference type="PRO" id="PR:Q38820"/>
<dbReference type="Proteomes" id="UP000006548">
    <property type="component" value="Chromosome 1"/>
</dbReference>
<dbReference type="ExpressionAtlas" id="Q38820">
    <property type="expression patterns" value="baseline and differential"/>
</dbReference>
<dbReference type="GO" id="GO:0005743">
    <property type="term" value="C:mitochondrial inner membrane"/>
    <property type="evidence" value="ECO:0007005"/>
    <property type="project" value="TAIR"/>
</dbReference>
<dbReference type="GO" id="GO:0005739">
    <property type="term" value="C:mitochondrion"/>
    <property type="evidence" value="ECO:0007005"/>
    <property type="project" value="TAIR"/>
</dbReference>
<dbReference type="GO" id="GO:0005744">
    <property type="term" value="C:TIM23 mitochondrial import inner membrane translocase complex"/>
    <property type="evidence" value="ECO:0007669"/>
    <property type="project" value="InterPro"/>
</dbReference>
<dbReference type="GO" id="GO:0008320">
    <property type="term" value="F:protein transmembrane transporter activity"/>
    <property type="evidence" value="ECO:0007669"/>
    <property type="project" value="InterPro"/>
</dbReference>
<dbReference type="GO" id="GO:0030150">
    <property type="term" value="P:protein import into mitochondrial matrix"/>
    <property type="evidence" value="ECO:0007669"/>
    <property type="project" value="InterPro"/>
</dbReference>
<dbReference type="InterPro" id="IPR005681">
    <property type="entry name" value="Tim23"/>
</dbReference>
<dbReference type="InterPro" id="IPR045238">
    <property type="entry name" value="Tim23-like"/>
</dbReference>
<dbReference type="NCBIfam" id="TIGR00983">
    <property type="entry name" value="3a0801s02tim23"/>
    <property type="match status" value="1"/>
</dbReference>
<dbReference type="PANTHER" id="PTHR15371:SF0">
    <property type="entry name" value="SD19278P"/>
    <property type="match status" value="1"/>
</dbReference>
<dbReference type="PANTHER" id="PTHR15371">
    <property type="entry name" value="TIM23"/>
    <property type="match status" value="1"/>
</dbReference>
<dbReference type="Pfam" id="PF02466">
    <property type="entry name" value="Tim17"/>
    <property type="match status" value="1"/>
</dbReference>
<evidence type="ECO:0000250" key="1"/>
<evidence type="ECO:0000255" key="2"/>
<evidence type="ECO:0000269" key="3">
    <source>
    </source>
</evidence>
<evidence type="ECO:0000269" key="4">
    <source>
    </source>
</evidence>
<evidence type="ECO:0000269" key="5">
    <source>
    </source>
</evidence>
<evidence type="ECO:0000305" key="6"/>
<proteinExistence type="evidence at protein level"/>
<comment type="function">
    <text evidence="1">Essential component of the TIM17:23 complex, a complex that mediates the translocation of transit peptide-containing proteins across the mitochondrial inner membrane. Links the inner and outer membranes (By similarity).</text>
</comment>
<comment type="subunit">
    <text evidence="5">Homomultimer. Component of the TIM17:23 complex at least composed of TIM23, TIM17 and TIM50. The complex interacts with the TIM44 component of the PAM complex. Also part of the NADH-ubiquinone oxidoreductase complex I. Interacts with OEP163, TIM17-2, TIM21, TIM50 and MPPA2.</text>
</comment>
<comment type="subcellular location">
    <subcellularLocation>
        <location evidence="6">Mitochondrion inner membrane</location>
        <topology evidence="6">Multi-pass membrane protein</topology>
    </subcellularLocation>
</comment>
<comment type="tissue specificity">
    <text evidence="3 4">Expressed in roots and young cotyledons. Detected in leaves and flowers.</text>
</comment>
<comment type="developmental stage">
    <text evidence="3">Peak of expression during cotyledon development.</text>
</comment>
<comment type="domain">
    <text>The C-terminal part (143-188) is required for insertion in the mitochondrial inner membrane.</text>
</comment>
<comment type="similarity">
    <text evidence="6">Belongs to the Tim17/Tim22/Tim23 family.</text>
</comment>
<organism>
    <name type="scientific">Arabidopsis thaliana</name>
    <name type="common">Mouse-ear cress</name>
    <dbReference type="NCBI Taxonomy" id="3702"/>
    <lineage>
        <taxon>Eukaryota</taxon>
        <taxon>Viridiplantae</taxon>
        <taxon>Streptophyta</taxon>
        <taxon>Embryophyta</taxon>
        <taxon>Tracheophyta</taxon>
        <taxon>Spermatophyta</taxon>
        <taxon>Magnoliopsida</taxon>
        <taxon>eudicotyledons</taxon>
        <taxon>Gunneridae</taxon>
        <taxon>Pentapetalae</taxon>
        <taxon>rosids</taxon>
        <taxon>malvids</taxon>
        <taxon>Brassicales</taxon>
        <taxon>Brassicaceae</taxon>
        <taxon>Camelineae</taxon>
        <taxon>Arabidopsis</taxon>
    </lineage>
</organism>
<gene>
    <name type="primary">TIM23-2</name>
    <name type="ordered locus">At1g72750</name>
    <name type="ORF">F28P22.6</name>
</gene>
<protein>
    <recommendedName>
        <fullName>Mitochondrial import inner membrane translocase subunit TIM23-2</fullName>
    </recommendedName>
</protein>
<sequence length="188" mass="19878">MAANNRSDHGSDENTRLYNPYQNYEVPINKSQYLYKLPTSPEFLFTEEALRQRRSWGENLTFYTGTAYLGGSVAGASVGVITGVKSFESGDTTKLKINRILNSSGQTGRTWGNRIGIIGLVYAGIESGIVAATDRDDVWTSVVAGLGTGAVCRAARGVRSAAVAGALGGLAAGAVVAGKQIVKRYVPI</sequence>
<accession>Q38820</accession>
<name>TI232_ARATH</name>
<keyword id="KW-0472">Membrane</keyword>
<keyword id="KW-0496">Mitochondrion</keyword>
<keyword id="KW-0999">Mitochondrion inner membrane</keyword>
<keyword id="KW-1185">Reference proteome</keyword>
<keyword id="KW-0812">Transmembrane</keyword>
<keyword id="KW-1133">Transmembrane helix</keyword>